<reference key="1">
    <citation type="journal article" date="2004" name="Mol. Phylogenet. Evol.">
        <title>A phylogeny of the extant Phocidae inferred from complete mitochondrial DNA coding regions.</title>
        <authorList>
            <person name="Davis C.S."/>
            <person name="Delisle I."/>
            <person name="Stirling I."/>
            <person name="Siniff D.B."/>
            <person name="Strobeck C."/>
        </authorList>
    </citation>
    <scope>NUCLEOTIDE SEQUENCE [GENOMIC DNA]</scope>
</reference>
<comment type="function">
    <text evidence="1">Core subunit of the mitochondrial membrane respiratory chain NADH dehydrogenase (Complex I) which catalyzes electron transfer from NADH through the respiratory chain, using ubiquinone as an electron acceptor. Part of the enzyme membrane arm which is embedded in the lipid bilayer and involved in proton translocation.</text>
</comment>
<comment type="catalytic activity">
    <reaction evidence="1">
        <text>a ubiquinone + NADH + 5 H(+)(in) = a ubiquinol + NAD(+) + 4 H(+)(out)</text>
        <dbReference type="Rhea" id="RHEA:29091"/>
        <dbReference type="Rhea" id="RHEA-COMP:9565"/>
        <dbReference type="Rhea" id="RHEA-COMP:9566"/>
        <dbReference type="ChEBI" id="CHEBI:15378"/>
        <dbReference type="ChEBI" id="CHEBI:16389"/>
        <dbReference type="ChEBI" id="CHEBI:17976"/>
        <dbReference type="ChEBI" id="CHEBI:57540"/>
        <dbReference type="ChEBI" id="CHEBI:57945"/>
        <dbReference type="EC" id="7.1.1.2"/>
    </reaction>
    <physiologicalReaction direction="left-to-right" evidence="1">
        <dbReference type="Rhea" id="RHEA:29092"/>
    </physiologicalReaction>
</comment>
<comment type="subunit">
    <text evidence="2">Core subunit of respiratory chain NADH dehydrogenase (Complex I) which is composed of 45 different subunits.</text>
</comment>
<comment type="subcellular location">
    <subcellularLocation>
        <location evidence="2">Mitochondrion inner membrane</location>
        <topology evidence="3">Multi-pass membrane protein</topology>
    </subcellularLocation>
</comment>
<comment type="similarity">
    <text evidence="4">Belongs to the complex I subunit 4L family.</text>
</comment>
<dbReference type="EC" id="7.1.1.2"/>
<dbReference type="EMBL" id="AY377244">
    <property type="protein sequence ID" value="AAQ93783.1"/>
    <property type="molecule type" value="Genomic_DNA"/>
</dbReference>
<dbReference type="RefSeq" id="YP_007625297.1">
    <property type="nucleotide sequence ID" value="NC_020641.1"/>
</dbReference>
<dbReference type="SMR" id="Q679A0"/>
<dbReference type="Ensembl" id="ENSNVIT00000035884.1">
    <property type="protein sequence ID" value="ENSNVIP00000032500.1"/>
    <property type="gene ID" value="ENSNVIG00000023201.1"/>
</dbReference>
<dbReference type="GeneID" id="14841847"/>
<dbReference type="KEGG" id="nvs:14841847"/>
<dbReference type="CTD" id="4539"/>
<dbReference type="GeneTree" id="ENSGT00390000004755"/>
<dbReference type="OrthoDB" id="19063at33554"/>
<dbReference type="Proteomes" id="UP000694425">
    <property type="component" value="Unplaced"/>
</dbReference>
<dbReference type="GO" id="GO:0005743">
    <property type="term" value="C:mitochondrial inner membrane"/>
    <property type="evidence" value="ECO:0000250"/>
    <property type="project" value="UniProtKB"/>
</dbReference>
<dbReference type="GO" id="GO:0045271">
    <property type="term" value="C:respiratory chain complex I"/>
    <property type="evidence" value="ECO:0000250"/>
    <property type="project" value="UniProtKB"/>
</dbReference>
<dbReference type="GO" id="GO:0008137">
    <property type="term" value="F:NADH dehydrogenase (ubiquinone) activity"/>
    <property type="evidence" value="ECO:0000250"/>
    <property type="project" value="UniProtKB"/>
</dbReference>
<dbReference type="GO" id="GO:0042773">
    <property type="term" value="P:ATP synthesis coupled electron transport"/>
    <property type="evidence" value="ECO:0007669"/>
    <property type="project" value="InterPro"/>
</dbReference>
<dbReference type="FunFam" id="1.10.287.3510:FF:000002">
    <property type="entry name" value="NADH-ubiquinone oxidoreductase chain 4L"/>
    <property type="match status" value="1"/>
</dbReference>
<dbReference type="Gene3D" id="1.10.287.3510">
    <property type="match status" value="1"/>
</dbReference>
<dbReference type="InterPro" id="IPR001133">
    <property type="entry name" value="NADH_UbQ_OxRdtase_chain4L/K"/>
</dbReference>
<dbReference type="InterPro" id="IPR039428">
    <property type="entry name" value="NUOK/Mnh_C1-like"/>
</dbReference>
<dbReference type="PANTHER" id="PTHR11434:SF0">
    <property type="entry name" value="NADH-UBIQUINONE OXIDOREDUCTASE CHAIN 4L"/>
    <property type="match status" value="1"/>
</dbReference>
<dbReference type="PANTHER" id="PTHR11434">
    <property type="entry name" value="NADH-UBIQUINONE OXIDOREDUCTASE SUBUNIT ND4L"/>
    <property type="match status" value="1"/>
</dbReference>
<dbReference type="Pfam" id="PF00420">
    <property type="entry name" value="Oxidored_q2"/>
    <property type="match status" value="1"/>
</dbReference>
<protein>
    <recommendedName>
        <fullName>NADH-ubiquinone oxidoreductase chain 4L</fullName>
        <ecNumber>7.1.1.2</ecNumber>
    </recommendedName>
    <alternativeName>
        <fullName>NADH dehydrogenase subunit 4L</fullName>
    </alternativeName>
</protein>
<name>NU4LM_NEOVI</name>
<accession>Q679A0</accession>
<evidence type="ECO:0000250" key="1">
    <source>
        <dbReference type="UniProtKB" id="P03901"/>
    </source>
</evidence>
<evidence type="ECO:0000250" key="2">
    <source>
        <dbReference type="UniProtKB" id="P03902"/>
    </source>
</evidence>
<evidence type="ECO:0000255" key="3"/>
<evidence type="ECO:0000305" key="4"/>
<proteinExistence type="inferred from homology"/>
<organism>
    <name type="scientific">Neovison vison</name>
    <name type="common">American mink</name>
    <name type="synonym">Mustela vison</name>
    <dbReference type="NCBI Taxonomy" id="452646"/>
    <lineage>
        <taxon>Eukaryota</taxon>
        <taxon>Metazoa</taxon>
        <taxon>Chordata</taxon>
        <taxon>Craniata</taxon>
        <taxon>Vertebrata</taxon>
        <taxon>Euteleostomi</taxon>
        <taxon>Mammalia</taxon>
        <taxon>Eutheria</taxon>
        <taxon>Laurasiatheria</taxon>
        <taxon>Carnivora</taxon>
        <taxon>Caniformia</taxon>
        <taxon>Musteloidea</taxon>
        <taxon>Mustelidae</taxon>
        <taxon>Mustelinae</taxon>
        <taxon>Neogale</taxon>
    </lineage>
</organism>
<geneLocation type="mitochondrion"/>
<feature type="chain" id="PRO_0000275071" description="NADH-ubiquinone oxidoreductase chain 4L">
    <location>
        <begin position="1"/>
        <end position="98"/>
    </location>
</feature>
<feature type="transmembrane region" description="Helical" evidence="3">
    <location>
        <begin position="1"/>
        <end position="21"/>
    </location>
</feature>
<feature type="transmembrane region" description="Helical" evidence="3">
    <location>
        <begin position="30"/>
        <end position="50"/>
    </location>
</feature>
<feature type="transmembrane region" description="Helical" evidence="3">
    <location>
        <begin position="61"/>
        <end position="81"/>
    </location>
</feature>
<gene>
    <name type="primary">MT-ND4L</name>
    <name type="synonym">MTND4L</name>
    <name type="synonym">NADH4L</name>
    <name type="synonym">ND4L</name>
</gene>
<keyword id="KW-0249">Electron transport</keyword>
<keyword id="KW-0472">Membrane</keyword>
<keyword id="KW-0496">Mitochondrion</keyword>
<keyword id="KW-0999">Mitochondrion inner membrane</keyword>
<keyword id="KW-0520">NAD</keyword>
<keyword id="KW-1185">Reference proteome</keyword>
<keyword id="KW-0679">Respiratory chain</keyword>
<keyword id="KW-1278">Translocase</keyword>
<keyword id="KW-0812">Transmembrane</keyword>
<keyword id="KW-1133">Transmembrane helix</keyword>
<keyword id="KW-0813">Transport</keyword>
<keyword id="KW-0830">Ubiquinone</keyword>
<sequence length="98" mass="10892">MSMVYINIFLAFTLSFMGLLIYRSHLMSSLLCLEGMMLSLFVMMTITILINHLTLASMTPIILLVFAACEAALGLSLLVMISTTYGTDYVQNLNLLQC</sequence>